<proteinExistence type="inferred from homology"/>
<gene>
    <name type="ordered locus">CAGL0G08294g</name>
</gene>
<evidence type="ECO:0000250" key="1">
    <source>
        <dbReference type="UniProtKB" id="Q06543"/>
    </source>
</evidence>
<evidence type="ECO:0000250" key="2">
    <source>
        <dbReference type="UniProtKB" id="Q9UYR9"/>
    </source>
</evidence>
<evidence type="ECO:0000305" key="3"/>
<protein>
    <recommendedName>
        <fullName evidence="1">GPN-loop GTPase 3</fullName>
    </recommendedName>
</protein>
<feature type="chain" id="PRO_0000255589" description="GPN-loop GTPase 3">
    <location>
        <begin position="1"/>
        <end position="271"/>
    </location>
</feature>
<feature type="short sequence motif" description="Gly-Pro-Asn (GPN)-loop; involved in dimer interface" evidence="2">
    <location>
        <begin position="70"/>
        <end position="72"/>
    </location>
</feature>
<feature type="binding site" evidence="2">
    <location>
        <begin position="13"/>
        <end position="18"/>
    </location>
    <ligand>
        <name>GTP</name>
        <dbReference type="ChEBI" id="CHEBI:37565"/>
    </ligand>
</feature>
<feature type="binding site" evidence="2">
    <location>
        <begin position="173"/>
        <end position="176"/>
    </location>
    <ligand>
        <name>GTP</name>
        <dbReference type="ChEBI" id="CHEBI:37565"/>
    </ligand>
</feature>
<feature type="site" description="Stabilizes the phosphate intermediate; shared with dimeric partner" evidence="2">
    <location>
        <position position="72"/>
    </location>
</feature>
<reference key="1">
    <citation type="journal article" date="2004" name="Nature">
        <title>Genome evolution in yeasts.</title>
        <authorList>
            <person name="Dujon B."/>
            <person name="Sherman D."/>
            <person name="Fischer G."/>
            <person name="Durrens P."/>
            <person name="Casaregola S."/>
            <person name="Lafontaine I."/>
            <person name="de Montigny J."/>
            <person name="Marck C."/>
            <person name="Neuveglise C."/>
            <person name="Talla E."/>
            <person name="Goffard N."/>
            <person name="Frangeul L."/>
            <person name="Aigle M."/>
            <person name="Anthouard V."/>
            <person name="Babour A."/>
            <person name="Barbe V."/>
            <person name="Barnay S."/>
            <person name="Blanchin S."/>
            <person name="Beckerich J.-M."/>
            <person name="Beyne E."/>
            <person name="Bleykasten C."/>
            <person name="Boisrame A."/>
            <person name="Boyer J."/>
            <person name="Cattolico L."/>
            <person name="Confanioleri F."/>
            <person name="de Daruvar A."/>
            <person name="Despons L."/>
            <person name="Fabre E."/>
            <person name="Fairhead C."/>
            <person name="Ferry-Dumazet H."/>
            <person name="Groppi A."/>
            <person name="Hantraye F."/>
            <person name="Hennequin C."/>
            <person name="Jauniaux N."/>
            <person name="Joyet P."/>
            <person name="Kachouri R."/>
            <person name="Kerrest A."/>
            <person name="Koszul R."/>
            <person name="Lemaire M."/>
            <person name="Lesur I."/>
            <person name="Ma L."/>
            <person name="Muller H."/>
            <person name="Nicaud J.-M."/>
            <person name="Nikolski M."/>
            <person name="Oztas S."/>
            <person name="Ozier-Kalogeropoulos O."/>
            <person name="Pellenz S."/>
            <person name="Potier S."/>
            <person name="Richard G.-F."/>
            <person name="Straub M.-L."/>
            <person name="Suleau A."/>
            <person name="Swennen D."/>
            <person name="Tekaia F."/>
            <person name="Wesolowski-Louvel M."/>
            <person name="Westhof E."/>
            <person name="Wirth B."/>
            <person name="Zeniou-Meyer M."/>
            <person name="Zivanovic Y."/>
            <person name="Bolotin-Fukuhara M."/>
            <person name="Thierry A."/>
            <person name="Bouchier C."/>
            <person name="Caudron B."/>
            <person name="Scarpelli C."/>
            <person name="Gaillardin C."/>
            <person name="Weissenbach J."/>
            <person name="Wincker P."/>
            <person name="Souciet J.-L."/>
        </authorList>
    </citation>
    <scope>NUCLEOTIDE SEQUENCE [LARGE SCALE GENOMIC DNA]</scope>
    <source>
        <strain>ATCC 2001 / BCRC 20586 / JCM 3761 / NBRC 0622 / NRRL Y-65 / CBS 138</strain>
    </source>
</reference>
<comment type="function">
    <text evidence="1">Small GTPase required for proper nuclear import of RNA polymerase II and III (RNAPII and RNAPIII). May act at an RNAP assembly step prior to nuclear import.</text>
</comment>
<comment type="subunit">
    <text evidence="1">Heterodimers with GPN1 or GPN2. Binds to RNA polymerase II (RNAPII).</text>
</comment>
<comment type="similarity">
    <text evidence="3">Belongs to the GPN-loop GTPase family.</text>
</comment>
<name>GPN3_CANGA</name>
<keyword id="KW-0342">GTP-binding</keyword>
<keyword id="KW-0378">Hydrolase</keyword>
<keyword id="KW-0547">Nucleotide-binding</keyword>
<keyword id="KW-1185">Reference proteome</keyword>
<accession>Q6FSS0</accession>
<dbReference type="EMBL" id="CR380953">
    <property type="protein sequence ID" value="CAG59651.1"/>
    <property type="molecule type" value="Genomic_DNA"/>
</dbReference>
<dbReference type="RefSeq" id="XP_446724.1">
    <property type="nucleotide sequence ID" value="XM_446724.1"/>
</dbReference>
<dbReference type="SMR" id="Q6FSS0"/>
<dbReference type="FunCoup" id="Q6FSS0">
    <property type="interactions" value="942"/>
</dbReference>
<dbReference type="STRING" id="284593.Q6FSS0"/>
<dbReference type="EnsemblFungi" id="CAGL0G08294g-T">
    <property type="protein sequence ID" value="CAGL0G08294g-T-p1"/>
    <property type="gene ID" value="CAGL0G08294g"/>
</dbReference>
<dbReference type="KEGG" id="cgr:2888203"/>
<dbReference type="CGD" id="CAL0129289">
    <property type="gene designation" value="CAGL0G08294g"/>
</dbReference>
<dbReference type="VEuPathDB" id="FungiDB:B1J91_G08294g"/>
<dbReference type="VEuPathDB" id="FungiDB:CAGL0G08294g"/>
<dbReference type="eggNOG" id="KOG1534">
    <property type="taxonomic scope" value="Eukaryota"/>
</dbReference>
<dbReference type="HOGENOM" id="CLU_037460_0_0_1"/>
<dbReference type="InParanoid" id="Q6FSS0"/>
<dbReference type="Proteomes" id="UP000002428">
    <property type="component" value="Chromosome G"/>
</dbReference>
<dbReference type="GO" id="GO:0005525">
    <property type="term" value="F:GTP binding"/>
    <property type="evidence" value="ECO:0007669"/>
    <property type="project" value="UniProtKB-KW"/>
</dbReference>
<dbReference type="GO" id="GO:0003924">
    <property type="term" value="F:GTPase activity"/>
    <property type="evidence" value="ECO:0007669"/>
    <property type="project" value="TreeGrafter"/>
</dbReference>
<dbReference type="GO" id="GO:0007064">
    <property type="term" value="P:mitotic sister chromatid cohesion"/>
    <property type="evidence" value="ECO:0007669"/>
    <property type="project" value="EnsemblFungi"/>
</dbReference>
<dbReference type="GO" id="GO:0006606">
    <property type="term" value="P:protein import into nucleus"/>
    <property type="evidence" value="ECO:0007669"/>
    <property type="project" value="EnsemblFungi"/>
</dbReference>
<dbReference type="CDD" id="cd17872">
    <property type="entry name" value="GPN3"/>
    <property type="match status" value="1"/>
</dbReference>
<dbReference type="FunFam" id="3.40.50.300:FF:000552">
    <property type="entry name" value="GPN-loop GTPase 3"/>
    <property type="match status" value="1"/>
</dbReference>
<dbReference type="Gene3D" id="3.40.50.300">
    <property type="entry name" value="P-loop containing nucleotide triphosphate hydrolases"/>
    <property type="match status" value="1"/>
</dbReference>
<dbReference type="InterPro" id="IPR004130">
    <property type="entry name" value="Gpn"/>
</dbReference>
<dbReference type="InterPro" id="IPR030228">
    <property type="entry name" value="Gpn3"/>
</dbReference>
<dbReference type="InterPro" id="IPR027417">
    <property type="entry name" value="P-loop_NTPase"/>
</dbReference>
<dbReference type="PANTHER" id="PTHR21231:SF7">
    <property type="entry name" value="GPN-LOOP GTPASE 3"/>
    <property type="match status" value="1"/>
</dbReference>
<dbReference type="PANTHER" id="PTHR21231">
    <property type="entry name" value="XPA-BINDING PROTEIN 1-RELATED"/>
    <property type="match status" value="1"/>
</dbReference>
<dbReference type="Pfam" id="PF03029">
    <property type="entry name" value="ATP_bind_1"/>
    <property type="match status" value="1"/>
</dbReference>
<dbReference type="SUPFAM" id="SSF52540">
    <property type="entry name" value="P-loop containing nucleoside triphosphate hydrolases"/>
    <property type="match status" value="1"/>
</dbReference>
<sequence>MSRVGLLVLGPAGAGKSTFCNSIISHMQTIGRRAHIVNLDPAAEPSKYEFTIDIRDLISLDDVMEELDLGPNGALIYCFEYLMKNLDWLDEEIGDYNDEYLIFDCPGQIELYTHIPVLPNIVRHLQGQLNFNLCATYLLEAPFVIDSSKFFSGALSAMSAMILLELPHINVLSKLDMIKDEYGKKKLKRFLNPDAMLLANEADQNLNPKFHHLNQCIANLVDDFGMVQFLPLEANNPESVATILSYVDDVTQWAEAQEQKEPKDQIDIEDL</sequence>
<organism>
    <name type="scientific">Candida glabrata (strain ATCC 2001 / BCRC 20586 / JCM 3761 / NBRC 0622 / NRRL Y-65 / CBS 138)</name>
    <name type="common">Yeast</name>
    <name type="synonym">Nakaseomyces glabratus</name>
    <dbReference type="NCBI Taxonomy" id="284593"/>
    <lineage>
        <taxon>Eukaryota</taxon>
        <taxon>Fungi</taxon>
        <taxon>Dikarya</taxon>
        <taxon>Ascomycota</taxon>
        <taxon>Saccharomycotina</taxon>
        <taxon>Saccharomycetes</taxon>
        <taxon>Saccharomycetales</taxon>
        <taxon>Saccharomycetaceae</taxon>
        <taxon>Nakaseomyces</taxon>
    </lineage>
</organism>